<dbReference type="EMBL" id="L06906">
    <property type="protein sequence ID" value="AAA48361.1"/>
    <property type="molecule type" value="Genomic_RNA"/>
</dbReference>
<dbReference type="EMBL" id="S55323">
    <property type="protein sequence ID" value="AAB25462.1"/>
    <property type="molecule type" value="Genomic_DNA"/>
</dbReference>
<dbReference type="KEGG" id="vg:1490015"/>
<dbReference type="Proteomes" id="UP000202605">
    <property type="component" value="Segment"/>
</dbReference>
<dbReference type="GO" id="GO:0042025">
    <property type="term" value="C:host cell nucleus"/>
    <property type="evidence" value="ECO:0007669"/>
    <property type="project" value="UniProtKB-SubCell"/>
</dbReference>
<dbReference type="GO" id="GO:0044423">
    <property type="term" value="C:virion component"/>
    <property type="evidence" value="ECO:0007669"/>
    <property type="project" value="UniProtKB-KW"/>
</dbReference>
<dbReference type="InterPro" id="IPR004247">
    <property type="entry name" value="Lentiviral_Vpr-like"/>
</dbReference>
<dbReference type="Pfam" id="PF02998">
    <property type="entry name" value="Lentiviral_Tat"/>
    <property type="match status" value="1"/>
</dbReference>
<organism>
    <name type="scientific">Maedi visna virus (strain KV1772)</name>
    <name type="common">MVV</name>
    <name type="synonym">Visna lentivirus</name>
    <dbReference type="NCBI Taxonomy" id="36374"/>
    <lineage>
        <taxon>Viruses</taxon>
        <taxon>Riboviria</taxon>
        <taxon>Pararnavirae</taxon>
        <taxon>Artverviricota</taxon>
        <taxon>Revtraviricetes</taxon>
        <taxon>Ortervirales</taxon>
        <taxon>Retroviridae</taxon>
        <taxon>Orthoretrovirinae</taxon>
        <taxon>Lentivirus</taxon>
        <taxon>Visna-maedi virus</taxon>
    </lineage>
</organism>
<reference key="1">
    <citation type="journal article" date="1993" name="Virology">
        <title>Nucleotide sequence and biological properties of a pathogenic proviral molecular clone of neurovirulent visna virus.</title>
        <authorList>
            <person name="Andresson O.S."/>
            <person name="Elser J.E."/>
            <person name="Tobin G.J."/>
            <person name="Greenwood J.D."/>
            <person name="Gonda M.A."/>
            <person name="Georgsson G."/>
            <person name="Andresdottir V."/>
            <person name="Benediktsdottir E."/>
            <person name="Carlsdottir H.M."/>
            <person name="Maentylae E.O."/>
            <person name="Rafnar B."/>
            <person name="Palsson P.A."/>
            <person name="Casey J.W."/>
            <person name="Petursson G."/>
        </authorList>
    </citation>
    <scope>NUCLEOTIDE SEQUENCE [GENOMIC RNA]</scope>
</reference>
<reference key="2">
    <citation type="journal article" date="2003" name="Virology">
        <title>Lack of trans-activation function for Maedi Visna virus and Caprine arthritis encephalitis virus Tat proteins.</title>
        <authorList>
            <person name="Villet S."/>
            <person name="Faure C."/>
            <person name="Bouzar B.A."/>
            <person name="Morin T."/>
            <person name="Verdier G."/>
            <person name="Chebloune Y."/>
            <person name="Legras C."/>
        </authorList>
    </citation>
    <scope>FUNCTION</scope>
</reference>
<reference key="3">
    <citation type="journal article" date="2003" name="J. Virol.">
        <title>Maedi-visna virus and caprine arthritis encephalitis virus genomes encode a Vpr-like but no Tat protein.</title>
        <authorList>
            <person name="Villet S."/>
            <person name="Bouzar B.A."/>
            <person name="Morin T."/>
            <person name="Verdier G."/>
            <person name="Legras C."/>
            <person name="Chebloune Y."/>
        </authorList>
    </citation>
    <scope>FUNCTION</scope>
    <scope>SUBCELLULAR LOCATION</scope>
</reference>
<keyword id="KW-0131">Cell cycle</keyword>
<keyword id="KW-1048">Host nucleus</keyword>
<keyword id="KW-0946">Virion</keyword>
<proteinExistence type="predicted"/>
<evidence type="ECO:0000269" key="1">
    <source>
    </source>
</evidence>
<evidence type="ECO:0000269" key="2">
    <source>
    </source>
</evidence>
<evidence type="ECO:0000305" key="3"/>
<accession>P35958</accession>
<comment type="function">
    <text evidence="1 2">Seems to function as a Vpr-like protein, since it mediates host cell cycle arrest in G2 phase. Cell cycle arrest creates a favorable environment for maximizing viral expression and production.</text>
</comment>
<comment type="subcellular location">
    <subcellularLocation>
        <location evidence="3">Virion</location>
    </subcellularLocation>
    <subcellularLocation>
        <location evidence="2">Host nucleus</location>
    </subcellularLocation>
</comment>
<comment type="caution">
    <text evidence="3">Was first thought to be the equivalent of lentiviral Tat protein, but it does not induce any transactivation of viral LTR promoter, or if any, at very low rate. The LTR promoter of this virus has a high basal activity and does apparently not need transactivation by a Tat-like protein.</text>
</comment>
<gene>
    <name type="primary">tat</name>
</gene>
<organismHost>
    <name type="scientific">Ovis aries</name>
    <name type="common">Sheep</name>
    <dbReference type="NCBI Taxonomy" id="9940"/>
</organismHost>
<sequence>MEEVPRRQPGGLVEVEGVFQFYEDWECWDYVSQRVPGERLQRWLAMLTNNQLRRQVIREAQIWMWKHKGAAVRRNCGCRLCNPGWGSQVRNVEL</sequence>
<name>VPRL_VILVK</name>
<feature type="chain" id="PRO_0000085493" description="Probable Vpr-like protein">
    <location>
        <begin position="1"/>
        <end position="94"/>
    </location>
</feature>
<protein>
    <recommendedName>
        <fullName>Probable Vpr-like protein</fullName>
    </recommendedName>
    <alternativeName>
        <fullName>Protein S</fullName>
    </alternativeName>
    <alternativeName>
        <fullName>Protein Tat</fullName>
    </alternativeName>
</protein>